<dbReference type="EC" id="4.1.99.12" evidence="1"/>
<dbReference type="EC" id="3.5.4.25" evidence="1"/>
<dbReference type="EMBL" id="AP010918">
    <property type="protein sequence ID" value="BAH25739.1"/>
    <property type="molecule type" value="Genomic_DNA"/>
</dbReference>
<dbReference type="RefSeq" id="WP_003407334.1">
    <property type="nucleotide sequence ID" value="NZ_CP014566.1"/>
</dbReference>
<dbReference type="SMR" id="C1AN60"/>
<dbReference type="KEGG" id="mbt:JTY_1451"/>
<dbReference type="HOGENOM" id="CLU_020273_1_2_11"/>
<dbReference type="UniPathway" id="UPA00275">
    <property type="reaction ID" value="UER00399"/>
</dbReference>
<dbReference type="UniPathway" id="UPA00275">
    <property type="reaction ID" value="UER00400"/>
</dbReference>
<dbReference type="GO" id="GO:0005829">
    <property type="term" value="C:cytosol"/>
    <property type="evidence" value="ECO:0007669"/>
    <property type="project" value="TreeGrafter"/>
</dbReference>
<dbReference type="GO" id="GO:0008686">
    <property type="term" value="F:3,4-dihydroxy-2-butanone-4-phosphate synthase activity"/>
    <property type="evidence" value="ECO:0007669"/>
    <property type="project" value="UniProtKB-UniRule"/>
</dbReference>
<dbReference type="GO" id="GO:0005525">
    <property type="term" value="F:GTP binding"/>
    <property type="evidence" value="ECO:0007669"/>
    <property type="project" value="UniProtKB-KW"/>
</dbReference>
<dbReference type="GO" id="GO:0003935">
    <property type="term" value="F:GTP cyclohydrolase II activity"/>
    <property type="evidence" value="ECO:0007669"/>
    <property type="project" value="UniProtKB-UniRule"/>
</dbReference>
<dbReference type="GO" id="GO:0000287">
    <property type="term" value="F:magnesium ion binding"/>
    <property type="evidence" value="ECO:0007669"/>
    <property type="project" value="UniProtKB-UniRule"/>
</dbReference>
<dbReference type="GO" id="GO:0030145">
    <property type="term" value="F:manganese ion binding"/>
    <property type="evidence" value="ECO:0007669"/>
    <property type="project" value="UniProtKB-UniRule"/>
</dbReference>
<dbReference type="GO" id="GO:0008270">
    <property type="term" value="F:zinc ion binding"/>
    <property type="evidence" value="ECO:0007669"/>
    <property type="project" value="UniProtKB-UniRule"/>
</dbReference>
<dbReference type="GO" id="GO:0009231">
    <property type="term" value="P:riboflavin biosynthetic process"/>
    <property type="evidence" value="ECO:0007669"/>
    <property type="project" value="UniProtKB-UniRule"/>
</dbReference>
<dbReference type="CDD" id="cd00641">
    <property type="entry name" value="GTP_cyclohydro2"/>
    <property type="match status" value="1"/>
</dbReference>
<dbReference type="FunFam" id="3.40.50.10990:FF:000001">
    <property type="entry name" value="Riboflavin biosynthesis protein RibBA"/>
    <property type="match status" value="1"/>
</dbReference>
<dbReference type="FunFam" id="3.90.870.10:FF:000001">
    <property type="entry name" value="Riboflavin biosynthesis protein RibBA"/>
    <property type="match status" value="1"/>
</dbReference>
<dbReference type="Gene3D" id="3.90.870.10">
    <property type="entry name" value="DHBP synthase"/>
    <property type="match status" value="1"/>
</dbReference>
<dbReference type="Gene3D" id="3.40.50.10990">
    <property type="entry name" value="GTP cyclohydrolase II"/>
    <property type="match status" value="1"/>
</dbReference>
<dbReference type="HAMAP" id="MF_00179">
    <property type="entry name" value="RibA"/>
    <property type="match status" value="1"/>
</dbReference>
<dbReference type="HAMAP" id="MF_00180">
    <property type="entry name" value="RibB"/>
    <property type="match status" value="1"/>
</dbReference>
<dbReference type="HAMAP" id="MF_01283">
    <property type="entry name" value="RibBA"/>
    <property type="match status" value="1"/>
</dbReference>
<dbReference type="InterPro" id="IPR017945">
    <property type="entry name" value="DHBP_synth_RibB-like_a/b_dom"/>
</dbReference>
<dbReference type="InterPro" id="IPR000422">
    <property type="entry name" value="DHBP_synthase_RibB"/>
</dbReference>
<dbReference type="InterPro" id="IPR032677">
    <property type="entry name" value="GTP_cyclohydro_II"/>
</dbReference>
<dbReference type="InterPro" id="IPR000926">
    <property type="entry name" value="RibA"/>
</dbReference>
<dbReference type="InterPro" id="IPR036144">
    <property type="entry name" value="RibA-like_sf"/>
</dbReference>
<dbReference type="InterPro" id="IPR016299">
    <property type="entry name" value="Riboflavin_synth_RibBA"/>
</dbReference>
<dbReference type="NCBIfam" id="NF001591">
    <property type="entry name" value="PRK00393.1"/>
    <property type="match status" value="1"/>
</dbReference>
<dbReference type="NCBIfam" id="NF006803">
    <property type="entry name" value="PRK09311.1"/>
    <property type="match status" value="1"/>
</dbReference>
<dbReference type="NCBIfam" id="TIGR00505">
    <property type="entry name" value="ribA"/>
    <property type="match status" value="1"/>
</dbReference>
<dbReference type="NCBIfam" id="TIGR00506">
    <property type="entry name" value="ribB"/>
    <property type="match status" value="1"/>
</dbReference>
<dbReference type="PANTHER" id="PTHR21327:SF18">
    <property type="entry name" value="3,4-DIHYDROXY-2-BUTANONE 4-PHOSPHATE SYNTHASE"/>
    <property type="match status" value="1"/>
</dbReference>
<dbReference type="PANTHER" id="PTHR21327">
    <property type="entry name" value="GTP CYCLOHYDROLASE II-RELATED"/>
    <property type="match status" value="1"/>
</dbReference>
<dbReference type="Pfam" id="PF00926">
    <property type="entry name" value="DHBP_synthase"/>
    <property type="match status" value="1"/>
</dbReference>
<dbReference type="Pfam" id="PF00925">
    <property type="entry name" value="GTP_cyclohydro2"/>
    <property type="match status" value="1"/>
</dbReference>
<dbReference type="PIRSF" id="PIRSF001259">
    <property type="entry name" value="RibA"/>
    <property type="match status" value="1"/>
</dbReference>
<dbReference type="SUPFAM" id="SSF142695">
    <property type="entry name" value="RibA-like"/>
    <property type="match status" value="1"/>
</dbReference>
<dbReference type="SUPFAM" id="SSF55821">
    <property type="entry name" value="YrdC/RibB"/>
    <property type="match status" value="1"/>
</dbReference>
<sequence>MTRLDSVERAVADIAAGKAVIVIDDEDRENEGDLIFAAEKATPEMVAFMVRYTSGYLCVPLDGAICDRLGLLPMYAVNQDKHGTAYTVTVDARNGIGTGISASDRATTMRLLADPTSVADDFTRPGHVVPLRAKDGGVLRRPGHTEAAVDLARMAGLQPAGAICEIVSQKDEGSMAHTDELRVFADEHGLALITIADLIEWRRKHEKHIERVAEARIPTRHGEFRAIGYTSIYEDVEHVALVRGEIAGPNADGDDVLVRVHSECLTGDVFGSRRCDCGPQLDAALAMVAREGRGVVLYMRGHEGRGIGLMHKLQAYQLQDAGADTVDANLKLGLPADARDYGIGAQILVDLGVRSMRLLTNNPAKRVGLDGYGLHIIERVPLPVRANAENIRYLMTKRDKLGHDLAGLDDFHESVHLPGEFGGAL</sequence>
<accession>C1AN60</accession>
<keyword id="KW-0342">GTP-binding</keyword>
<keyword id="KW-0378">Hydrolase</keyword>
<keyword id="KW-0456">Lyase</keyword>
<keyword id="KW-0460">Magnesium</keyword>
<keyword id="KW-0464">Manganese</keyword>
<keyword id="KW-0479">Metal-binding</keyword>
<keyword id="KW-0511">Multifunctional enzyme</keyword>
<keyword id="KW-0547">Nucleotide-binding</keyword>
<keyword id="KW-0686">Riboflavin biosynthesis</keyword>
<keyword id="KW-0862">Zinc</keyword>
<protein>
    <recommendedName>
        <fullName evidence="1">Riboflavin biosynthesis protein RibBA</fullName>
    </recommendedName>
    <domain>
        <recommendedName>
            <fullName evidence="1">3,4-dihydroxy-2-butanone 4-phosphate synthase</fullName>
            <shortName evidence="1">DHBP synthase</shortName>
            <ecNumber evidence="1">4.1.99.12</ecNumber>
        </recommendedName>
    </domain>
    <domain>
        <recommendedName>
            <fullName evidence="1">GTP cyclohydrolase-2</fullName>
            <ecNumber evidence="1">3.5.4.25</ecNumber>
        </recommendedName>
        <alternativeName>
            <fullName evidence="1">GTP cyclohydrolase II</fullName>
        </alternativeName>
    </domain>
</protein>
<feature type="chain" id="PRO_1000165252" description="Riboflavin biosynthesis protein RibBA">
    <location>
        <begin position="1"/>
        <end position="425"/>
    </location>
</feature>
<feature type="region of interest" description="DHBP synthase">
    <location>
        <begin position="1"/>
        <end position="204"/>
    </location>
</feature>
<feature type="region of interest" description="GTP cyclohydrolase II">
    <location>
        <begin position="205"/>
        <end position="425"/>
    </location>
</feature>
<feature type="active site" description="Proton acceptor; for GTP cyclohydrolase activity" evidence="1">
    <location>
        <position position="337"/>
    </location>
</feature>
<feature type="active site" description="Nucleophile; for GTP cyclohydrolase activity" evidence="1">
    <location>
        <position position="339"/>
    </location>
</feature>
<feature type="binding site" evidence="1">
    <location>
        <begin position="28"/>
        <end position="29"/>
    </location>
    <ligand>
        <name>D-ribulose 5-phosphate</name>
        <dbReference type="ChEBI" id="CHEBI:58121"/>
    </ligand>
</feature>
<feature type="binding site" evidence="1">
    <location>
        <position position="29"/>
    </location>
    <ligand>
        <name>Mg(2+)</name>
        <dbReference type="ChEBI" id="CHEBI:18420"/>
        <label>1</label>
    </ligand>
</feature>
<feature type="binding site" evidence="1">
    <location>
        <position position="29"/>
    </location>
    <ligand>
        <name>Mg(2+)</name>
        <dbReference type="ChEBI" id="CHEBI:18420"/>
        <label>2</label>
    </ligand>
</feature>
<feature type="binding site" evidence="1">
    <location>
        <position position="33"/>
    </location>
    <ligand>
        <name>D-ribulose 5-phosphate</name>
        <dbReference type="ChEBI" id="CHEBI:58121"/>
    </ligand>
</feature>
<feature type="binding site" evidence="1">
    <location>
        <begin position="141"/>
        <end position="145"/>
    </location>
    <ligand>
        <name>D-ribulose 5-phosphate</name>
        <dbReference type="ChEBI" id="CHEBI:58121"/>
    </ligand>
</feature>
<feature type="binding site" evidence="1">
    <location>
        <position position="144"/>
    </location>
    <ligand>
        <name>Mg(2+)</name>
        <dbReference type="ChEBI" id="CHEBI:18420"/>
        <label>2</label>
    </ligand>
</feature>
<feature type="binding site" evidence="1">
    <location>
        <position position="165"/>
    </location>
    <ligand>
        <name>D-ribulose 5-phosphate</name>
        <dbReference type="ChEBI" id="CHEBI:58121"/>
    </ligand>
</feature>
<feature type="binding site" evidence="1">
    <location>
        <begin position="259"/>
        <end position="263"/>
    </location>
    <ligand>
        <name>GTP</name>
        <dbReference type="ChEBI" id="CHEBI:37565"/>
    </ligand>
</feature>
<feature type="binding site" evidence="1">
    <location>
        <position position="264"/>
    </location>
    <ligand>
        <name>Zn(2+)</name>
        <dbReference type="ChEBI" id="CHEBI:29105"/>
        <note>catalytic</note>
    </ligand>
</feature>
<feature type="binding site" evidence="1">
    <location>
        <position position="275"/>
    </location>
    <ligand>
        <name>Zn(2+)</name>
        <dbReference type="ChEBI" id="CHEBI:29105"/>
        <note>catalytic</note>
    </ligand>
</feature>
<feature type="binding site" evidence="1">
    <location>
        <position position="277"/>
    </location>
    <ligand>
        <name>Zn(2+)</name>
        <dbReference type="ChEBI" id="CHEBI:29105"/>
        <note>catalytic</note>
    </ligand>
</feature>
<feature type="binding site" evidence="1">
    <location>
        <position position="280"/>
    </location>
    <ligand>
        <name>GTP</name>
        <dbReference type="ChEBI" id="CHEBI:37565"/>
    </ligand>
</feature>
<feature type="binding site" evidence="1">
    <location>
        <begin position="303"/>
        <end position="305"/>
    </location>
    <ligand>
        <name>GTP</name>
        <dbReference type="ChEBI" id="CHEBI:37565"/>
    </ligand>
</feature>
<feature type="binding site" evidence="1">
    <location>
        <position position="325"/>
    </location>
    <ligand>
        <name>GTP</name>
        <dbReference type="ChEBI" id="CHEBI:37565"/>
    </ligand>
</feature>
<feature type="binding site" evidence="1">
    <location>
        <position position="360"/>
    </location>
    <ligand>
        <name>GTP</name>
        <dbReference type="ChEBI" id="CHEBI:37565"/>
    </ligand>
</feature>
<feature type="binding site" evidence="1">
    <location>
        <position position="365"/>
    </location>
    <ligand>
        <name>GTP</name>
        <dbReference type="ChEBI" id="CHEBI:37565"/>
    </ligand>
</feature>
<feature type="site" description="Essential for DHBP synthase activity" evidence="1">
    <location>
        <position position="127"/>
    </location>
</feature>
<feature type="site" description="Essential for DHBP synthase activity" evidence="1">
    <location>
        <position position="165"/>
    </location>
</feature>
<reference key="1">
    <citation type="journal article" date="2009" name="Vaccine">
        <title>Whole genome sequence analysis of Mycobacterium bovis bacillus Calmette-Guerin (BCG) Tokyo 172: a comparative study of BCG vaccine substrains.</title>
        <authorList>
            <person name="Seki M."/>
            <person name="Honda I."/>
            <person name="Fujita I."/>
            <person name="Yano I."/>
            <person name="Yamamoto S."/>
            <person name="Koyama A."/>
        </authorList>
    </citation>
    <scope>NUCLEOTIDE SEQUENCE [LARGE SCALE GENOMIC DNA]</scope>
    <source>
        <strain>BCG / Tokyo 172 / ATCC 35737 / TMC 1019</strain>
    </source>
</reference>
<comment type="function">
    <text evidence="1">Catalyzes the conversion of D-ribulose 5-phosphate to formate and 3,4-dihydroxy-2-butanone 4-phosphate.</text>
</comment>
<comment type="function">
    <text evidence="1">Catalyzes the conversion of GTP to 2,5-diamino-6-ribosylamino-4(3H)-pyrimidinone 5'-phosphate (DARP), formate and pyrophosphate.</text>
</comment>
<comment type="catalytic activity">
    <reaction evidence="1">
        <text>D-ribulose 5-phosphate = (2S)-2-hydroxy-3-oxobutyl phosphate + formate + H(+)</text>
        <dbReference type="Rhea" id="RHEA:18457"/>
        <dbReference type="ChEBI" id="CHEBI:15378"/>
        <dbReference type="ChEBI" id="CHEBI:15740"/>
        <dbReference type="ChEBI" id="CHEBI:58121"/>
        <dbReference type="ChEBI" id="CHEBI:58830"/>
        <dbReference type="EC" id="4.1.99.12"/>
    </reaction>
</comment>
<comment type="catalytic activity">
    <reaction evidence="1">
        <text>GTP + 4 H2O = 2,5-diamino-6-hydroxy-4-(5-phosphoribosylamino)-pyrimidine + formate + 2 phosphate + 3 H(+)</text>
        <dbReference type="Rhea" id="RHEA:23704"/>
        <dbReference type="ChEBI" id="CHEBI:15377"/>
        <dbReference type="ChEBI" id="CHEBI:15378"/>
        <dbReference type="ChEBI" id="CHEBI:15740"/>
        <dbReference type="ChEBI" id="CHEBI:37565"/>
        <dbReference type="ChEBI" id="CHEBI:43474"/>
        <dbReference type="ChEBI" id="CHEBI:58614"/>
        <dbReference type="EC" id="3.5.4.25"/>
    </reaction>
</comment>
<comment type="cofactor">
    <cofactor evidence="1">
        <name>Mg(2+)</name>
        <dbReference type="ChEBI" id="CHEBI:18420"/>
    </cofactor>
    <cofactor evidence="1">
        <name>Mn(2+)</name>
        <dbReference type="ChEBI" id="CHEBI:29035"/>
    </cofactor>
    <text evidence="1">Binds 2 divalent metal cations per subunit. Magnesium or manganese.</text>
</comment>
<comment type="cofactor">
    <cofactor evidence="1">
        <name>Zn(2+)</name>
        <dbReference type="ChEBI" id="CHEBI:29105"/>
    </cofactor>
    <text evidence="1">Binds 1 zinc ion per subunit.</text>
</comment>
<comment type="pathway">
    <text evidence="1">Cofactor biosynthesis; riboflavin biosynthesis; 2-hydroxy-3-oxobutyl phosphate from D-ribulose 5-phosphate: step 1/1.</text>
</comment>
<comment type="pathway">
    <text evidence="1">Cofactor biosynthesis; riboflavin biosynthesis; 5-amino-6-(D-ribitylamino)uracil from GTP: step 1/4.</text>
</comment>
<comment type="similarity">
    <text evidence="1">In the N-terminal section; belongs to the DHBP synthase family.</text>
</comment>
<comment type="similarity">
    <text evidence="1">In the C-terminal section; belongs to the GTP cyclohydrolase II family.</text>
</comment>
<proteinExistence type="inferred from homology"/>
<evidence type="ECO:0000255" key="1">
    <source>
        <dbReference type="HAMAP-Rule" id="MF_01283"/>
    </source>
</evidence>
<organism>
    <name type="scientific">Mycobacterium bovis (strain BCG / Tokyo 172 / ATCC 35737 / TMC 1019)</name>
    <dbReference type="NCBI Taxonomy" id="561275"/>
    <lineage>
        <taxon>Bacteria</taxon>
        <taxon>Bacillati</taxon>
        <taxon>Actinomycetota</taxon>
        <taxon>Actinomycetes</taxon>
        <taxon>Mycobacteriales</taxon>
        <taxon>Mycobacteriaceae</taxon>
        <taxon>Mycobacterium</taxon>
        <taxon>Mycobacterium tuberculosis complex</taxon>
    </lineage>
</organism>
<name>RIBBA_MYCBT</name>
<gene>
    <name evidence="1" type="primary">ribBA</name>
    <name type="ordered locus">JTY_1451</name>
</gene>